<sequence>GLVNGLLSSVLGGGQGGGGLLGGIL</sequence>
<proteinExistence type="evidence at protein level"/>
<feature type="peptide" id="PRO_0000449664" description="Plasticin-L1" evidence="1">
    <location>
        <begin position="1"/>
        <end position="25"/>
    </location>
</feature>
<keyword id="KW-0878">Amphibian defense peptide</keyword>
<keyword id="KW-0903">Direct protein sequencing</keyword>
<keyword id="KW-0391">Immunity</keyword>
<keyword id="KW-0399">Innate immunity</keyword>
<keyword id="KW-0472">Membrane</keyword>
<keyword id="KW-0964">Secreted</keyword>
<keyword id="KW-1052">Target cell membrane</keyword>
<keyword id="KW-1053">Target membrane</keyword>
<organism>
    <name type="scientific">Leptodactylus laticeps</name>
    <name type="common">Santa Fe frog</name>
    <dbReference type="NCBI Taxonomy" id="1615745"/>
    <lineage>
        <taxon>Eukaryota</taxon>
        <taxon>Metazoa</taxon>
        <taxon>Chordata</taxon>
        <taxon>Craniata</taxon>
        <taxon>Vertebrata</taxon>
        <taxon>Euteleostomi</taxon>
        <taxon>Amphibia</taxon>
        <taxon>Batrachia</taxon>
        <taxon>Anura</taxon>
        <taxon>Neobatrachia</taxon>
        <taxon>Hyloidea</taxon>
        <taxon>Leptodactylidae</taxon>
        <taxon>Leptodactylinae</taxon>
        <taxon>Leptodactylus</taxon>
    </lineage>
</organism>
<protein>
    <recommendedName>
        <fullName evidence="3">Plasticin-L1</fullName>
        <shortName evidence="4">PTC-L1</shortName>
    </recommendedName>
</protein>
<reference key="1">
    <citation type="journal article" date="2009" name="Peptides">
        <title>A glycine-leucine-rich peptide structurally related to the plasticins from skin secretions of the frog Leptodactylus laticeps (Leptodactylidae).</title>
        <authorList>
            <person name="Conlon J.M."/>
            <person name="Abdel-Wahab Y.H."/>
            <person name="Flatt P.R."/>
            <person name="Leprince J."/>
            <person name="Vaudry H."/>
            <person name="Jouenne T."/>
            <person name="Condamine E."/>
        </authorList>
    </citation>
    <scope>PROTEIN SEQUENCE</scope>
    <scope>FUNCTION</scope>
    <scope>SYNTHESIS</scope>
    <scope>MASS SPECTROMETRY</scope>
    <scope>SUBCELLULAR LOCATION</scope>
    <source>
        <tissue>Skin secretion</tissue>
    </source>
</reference>
<reference key="2">
    <citation type="journal article" date="2013" name="Biochemistry">
        <title>Conformational analysis of the frog skin peptide, plasticin-L1, and its effects on production of proinflammatory cytokines by macrophages.</title>
        <authorList>
            <person name="Scorciapino M.A."/>
            <person name="Manzo G."/>
            <person name="Rinaldi A.C."/>
            <person name="Sanna R."/>
            <person name="Casu M."/>
            <person name="Pantic J.M."/>
            <person name="Lukic M.L."/>
            <person name="Conlon J.M."/>
        </authorList>
    </citation>
    <scope>STRUCTURE BY NMR IN MEMBRANE-MIMETIC ENVIRONMENT</scope>
    <scope>FUNCTION</scope>
</reference>
<dbReference type="GO" id="GO:0005576">
    <property type="term" value="C:extracellular region"/>
    <property type="evidence" value="ECO:0007669"/>
    <property type="project" value="UniProtKB-SubCell"/>
</dbReference>
<dbReference type="GO" id="GO:0016020">
    <property type="term" value="C:membrane"/>
    <property type="evidence" value="ECO:0007669"/>
    <property type="project" value="UniProtKB-KW"/>
</dbReference>
<dbReference type="GO" id="GO:0044218">
    <property type="term" value="C:other organism cell membrane"/>
    <property type="evidence" value="ECO:0007669"/>
    <property type="project" value="UniProtKB-KW"/>
</dbReference>
<dbReference type="GO" id="GO:0045087">
    <property type="term" value="P:innate immune response"/>
    <property type="evidence" value="ECO:0007669"/>
    <property type="project" value="UniProtKB-KW"/>
</dbReference>
<accession>P0DTD7</accession>
<evidence type="ECO:0000269" key="1">
    <source>
    </source>
</evidence>
<evidence type="ECO:0000269" key="2">
    <source>
    </source>
</evidence>
<evidence type="ECO:0000303" key="3">
    <source>
    </source>
</evidence>
<evidence type="ECO:0000305" key="4"/>
<evidence type="ECO:0000305" key="5">
    <source>
    </source>
</evidence>
<evidence type="ECO:0000305" key="6">
    <source>
    </source>
</evidence>
<comment type="function">
    <text evidence="1 2 6">May play an immunomodulatory role in frog skin in response to microbial pathogens, since it increases the production of the pro-inflammatory cytokines TNF-alpha, IL-1 beta, IL-12, and IL-23 by mouse peritoneal macrophages and has no effect on the production of the anti-inflammatory cytokine IL-10 (PubMed:24073891). It is not known whether stimulation of cytokine production arises from a non-specific interaction of the peptide with the macrophage membrane or from interaction with a specific receptor (Probable). Shows a low activity in stimulating insulin release from rat BRIN-BD11 beta cells, and acts without loss of integrity of the plasma membrane (PubMed:19428765). Shows a marked affinity for both neutral and anionic membranes models (PubMed:24073891). Does not show antibacterial (E.coli and S.aureus) (PubMed:19428765). Does not show hemolytic activity against human erythrocytes (PubMed:19428765).</text>
</comment>
<comment type="subcellular location">
    <subcellularLocation>
        <location evidence="1">Secreted</location>
    </subcellularLocation>
    <subcellularLocation>
        <location evidence="2">Target cell membrane</location>
    </subcellularLocation>
    <text evidence="6">Forms a helical membrane channel in the target.</text>
</comment>
<comment type="tissue specificity">
    <text evidence="5">Expressed by the skin glands.</text>
</comment>
<comment type="domain">
    <text evidence="5">Amphipathic peptide that adopts a random coil conformation in water, a beta-sheet structure in methanol, and an alpha-helical conformation in trifluoroethanol-water.</text>
</comment>
<comment type="domain">
    <text evidence="4">Plasticins have huge conformational plasticity. They can display random coil, alpha-helical, beta-sheet or beta-harpin structures.</text>
</comment>
<comment type="mass spectrometry">
    <text>Monoisotopic mass.</text>
</comment>
<comment type="similarity">
    <text evidence="4">Belongs to the frog skin active peptide (FSAP) family. Plasticin subfamily.</text>
</comment>
<name>PTC1_LEPLD</name>